<dbReference type="EMBL" id="M20255">
    <property type="protein sequence ID" value="AAA82519.1"/>
    <property type="molecule type" value="Genomic_DNA"/>
</dbReference>
<dbReference type="EMBL" id="CP001983">
    <property type="protein sequence ID" value="ADE72133.1"/>
    <property type="molecule type" value="Genomic_DNA"/>
</dbReference>
<dbReference type="PIR" id="A31482">
    <property type="entry name" value="A31482"/>
</dbReference>
<dbReference type="RefSeq" id="WP_013059806.1">
    <property type="nucleotide sequence ID" value="NC_014019.1"/>
</dbReference>
<dbReference type="STRING" id="545693.BMQ_5155"/>
<dbReference type="TCDB" id="1.A.77.3.4">
    <property type="family name" value="the mg(2+)/ca(2+) uniporter (mcu) family"/>
</dbReference>
<dbReference type="KEGG" id="bmq:BMQ_5155"/>
<dbReference type="eggNOG" id="ENOG5032XWN">
    <property type="taxonomic scope" value="Bacteria"/>
</dbReference>
<dbReference type="HOGENOM" id="CLU_147331_0_0_9"/>
<dbReference type="Proteomes" id="UP000000935">
    <property type="component" value="Chromosome"/>
</dbReference>
<dbReference type="GO" id="GO:0005886">
    <property type="term" value="C:plasma membrane"/>
    <property type="evidence" value="ECO:0007669"/>
    <property type="project" value="UniProtKB-SubCell"/>
</dbReference>
<dbReference type="GO" id="GO:0045259">
    <property type="term" value="C:proton-transporting ATP synthase complex"/>
    <property type="evidence" value="ECO:0007669"/>
    <property type="project" value="UniProtKB-KW"/>
</dbReference>
<dbReference type="GO" id="GO:1902600">
    <property type="term" value="P:proton transmembrane transport"/>
    <property type="evidence" value="ECO:0007669"/>
    <property type="project" value="UniProtKB-KW"/>
</dbReference>
<dbReference type="InterPro" id="IPR005598">
    <property type="entry name" value="ATP_synth_I"/>
</dbReference>
<dbReference type="InterPro" id="IPR039072">
    <property type="entry name" value="ATP_synth_I_Bacilli"/>
</dbReference>
<dbReference type="PANTHER" id="PTHR40035">
    <property type="entry name" value="ATP SYNTHASE PROTEIN I"/>
    <property type="match status" value="1"/>
</dbReference>
<dbReference type="PANTHER" id="PTHR40035:SF1">
    <property type="entry name" value="ATP SYNTHASE PROTEIN I"/>
    <property type="match status" value="1"/>
</dbReference>
<dbReference type="Pfam" id="PF03899">
    <property type="entry name" value="ATP-synt_I"/>
    <property type="match status" value="1"/>
</dbReference>
<gene>
    <name type="primary">atpI</name>
    <name type="ordered locus">BMQ_5155</name>
</gene>
<organism>
    <name type="scientific">Priestia megaterium (strain ATCC 12872 / QMB1551)</name>
    <name type="common">Bacillus megaterium</name>
    <dbReference type="NCBI Taxonomy" id="545693"/>
    <lineage>
        <taxon>Bacteria</taxon>
        <taxon>Bacillati</taxon>
        <taxon>Bacillota</taxon>
        <taxon>Bacilli</taxon>
        <taxon>Bacillales</taxon>
        <taxon>Bacillaceae</taxon>
        <taxon>Priestia</taxon>
    </lineage>
</organism>
<feature type="chain" id="PRO_0000071703" description="ATP synthase protein I">
    <location>
        <begin position="1"/>
        <end position="123"/>
    </location>
</feature>
<feature type="transmembrane region" description="Helical" evidence="1">
    <location>
        <begin position="15"/>
        <end position="35"/>
    </location>
</feature>
<feature type="transmembrane region" description="Helical" evidence="1">
    <location>
        <begin position="36"/>
        <end position="53"/>
    </location>
</feature>
<feature type="transmembrane region" description="Helical" evidence="1">
    <location>
        <begin position="72"/>
        <end position="92"/>
    </location>
</feature>
<feature type="transmembrane region" description="Helical" evidence="1">
    <location>
        <begin position="97"/>
        <end position="117"/>
    </location>
</feature>
<accession>P20598</accession>
<accession>D5DWG8</accession>
<protein>
    <recommendedName>
        <fullName>ATP synthase protein I</fullName>
    </recommendedName>
</protein>
<keyword id="KW-1003">Cell membrane</keyword>
<keyword id="KW-0138">CF(0)</keyword>
<keyword id="KW-0375">Hydrogen ion transport</keyword>
<keyword id="KW-0406">Ion transport</keyword>
<keyword id="KW-0472">Membrane</keyword>
<keyword id="KW-1185">Reference proteome</keyword>
<keyword id="KW-0812">Transmembrane</keyword>
<keyword id="KW-1133">Transmembrane helix</keyword>
<keyword id="KW-0813">Transport</keyword>
<reference key="1">
    <citation type="journal article" date="1989" name="J. Biol. Chem.">
        <title>Organization and sequence of the genes coding for the proton-translocating ATPase of Bacillus megaterium.</title>
        <authorList>
            <person name="Brusilow W.S.A."/>
            <person name="Scarpetta M.A."/>
            <person name="Hawthorne C.A."/>
            <person name="Clark W.P."/>
        </authorList>
    </citation>
    <scope>NUCLEOTIDE SEQUENCE [GENOMIC DNA]</scope>
</reference>
<reference key="2">
    <citation type="journal article" date="2011" name="J. Bacteriol.">
        <title>Genome sequences of the biotechnologically important Bacillus megaterium strains QM B1551 and DSM319.</title>
        <authorList>
            <person name="Eppinger M."/>
            <person name="Bunk B."/>
            <person name="Johns M.A."/>
            <person name="Edirisinghe J.N."/>
            <person name="Kutumbaka K.K."/>
            <person name="Koenig S.S."/>
            <person name="Creasy H.H."/>
            <person name="Rosovitz M.J."/>
            <person name="Riley D.R."/>
            <person name="Daugherty S."/>
            <person name="Martin M."/>
            <person name="Elbourne L.D."/>
            <person name="Paulsen I."/>
            <person name="Biedendieck R."/>
            <person name="Braun C."/>
            <person name="Grayburn S."/>
            <person name="Dhingra S."/>
            <person name="Lukyanchuk V."/>
            <person name="Ball B."/>
            <person name="Ul-Qamar R."/>
            <person name="Seibel J."/>
            <person name="Bremer E."/>
            <person name="Jahn D."/>
            <person name="Ravel J."/>
            <person name="Vary P.S."/>
        </authorList>
    </citation>
    <scope>NUCLEOTIDE SEQUENCE [LARGE SCALE GENOMIC DNA]</scope>
    <source>
        <strain>ATCC 12872 / DSM 1804 / QMB1551</strain>
    </source>
</reference>
<comment type="function">
    <text>A possible function for this protein is to guide the assembly of the membrane sector of the ATPase enzyme complex.</text>
</comment>
<comment type="subcellular location">
    <subcellularLocation>
        <location evidence="2">Cell membrane</location>
        <topology evidence="2">Multi-pass membrane protein</topology>
    </subcellularLocation>
</comment>
<comment type="similarity">
    <text evidence="2">Belongs to the bacterial AtpI family.</text>
</comment>
<name>ATPZ_PRIM1</name>
<proteinExistence type="inferred from homology"/>
<sequence length="123" mass="14031">MQDLQHVFPRLRSYILYLLALYVLGWGFTSYKAVFAGLILGTALSLYNLWNLVRKFEQFGQALDEGKKPRSIGTVVRFATAALAVVITISYPKTFHIISVVVGLMTYYVVIIIDLVVQNMRRR</sequence>
<evidence type="ECO:0000255" key="1"/>
<evidence type="ECO:0000305" key="2"/>